<organism>
    <name type="scientific">Schizosaccharomyces pombe (strain 972 / ATCC 24843)</name>
    <name type="common">Fission yeast</name>
    <dbReference type="NCBI Taxonomy" id="284812"/>
    <lineage>
        <taxon>Eukaryota</taxon>
        <taxon>Fungi</taxon>
        <taxon>Dikarya</taxon>
        <taxon>Ascomycota</taxon>
        <taxon>Taphrinomycotina</taxon>
        <taxon>Schizosaccharomycetes</taxon>
        <taxon>Schizosaccharomycetales</taxon>
        <taxon>Schizosaccharomycetaceae</taxon>
        <taxon>Schizosaccharomyces</taxon>
    </lineage>
</organism>
<protein>
    <recommendedName>
        <fullName>Chromatin remodeling factor mit1</fullName>
        <ecNumber>3.6.4.-</ecNumber>
    </recommendedName>
    <alternativeName>
        <fullName>Mi2-like interacting with clr3 protein 1</fullName>
    </alternativeName>
    <alternativeName>
        <fullName>Snf2/Hdac-containing repressor complex protein mit1</fullName>
        <shortName>SHREC protein mit1</shortName>
    </alternativeName>
</protein>
<reference key="1">
    <citation type="journal article" date="2002" name="Nature">
        <title>The genome sequence of Schizosaccharomyces pombe.</title>
        <authorList>
            <person name="Wood V."/>
            <person name="Gwilliam R."/>
            <person name="Rajandream M.A."/>
            <person name="Lyne M.H."/>
            <person name="Lyne R."/>
            <person name="Stewart A."/>
            <person name="Sgouros J.G."/>
            <person name="Peat N."/>
            <person name="Hayles J."/>
            <person name="Baker S.G."/>
            <person name="Basham D."/>
            <person name="Bowman S."/>
            <person name="Brooks K."/>
            <person name="Brown D."/>
            <person name="Brown S."/>
            <person name="Chillingworth T."/>
            <person name="Churcher C.M."/>
            <person name="Collins M."/>
            <person name="Connor R."/>
            <person name="Cronin A."/>
            <person name="Davis P."/>
            <person name="Feltwell T."/>
            <person name="Fraser A."/>
            <person name="Gentles S."/>
            <person name="Goble A."/>
            <person name="Hamlin N."/>
            <person name="Harris D.E."/>
            <person name="Hidalgo J."/>
            <person name="Hodgson G."/>
            <person name="Holroyd S."/>
            <person name="Hornsby T."/>
            <person name="Howarth S."/>
            <person name="Huckle E.J."/>
            <person name="Hunt S."/>
            <person name="Jagels K."/>
            <person name="James K.D."/>
            <person name="Jones L."/>
            <person name="Jones M."/>
            <person name="Leather S."/>
            <person name="McDonald S."/>
            <person name="McLean J."/>
            <person name="Mooney P."/>
            <person name="Moule S."/>
            <person name="Mungall K.L."/>
            <person name="Murphy L.D."/>
            <person name="Niblett D."/>
            <person name="Odell C."/>
            <person name="Oliver K."/>
            <person name="O'Neil S."/>
            <person name="Pearson D."/>
            <person name="Quail M.A."/>
            <person name="Rabbinowitsch E."/>
            <person name="Rutherford K.M."/>
            <person name="Rutter S."/>
            <person name="Saunders D."/>
            <person name="Seeger K."/>
            <person name="Sharp S."/>
            <person name="Skelton J."/>
            <person name="Simmonds M.N."/>
            <person name="Squares R."/>
            <person name="Squares S."/>
            <person name="Stevens K."/>
            <person name="Taylor K."/>
            <person name="Taylor R.G."/>
            <person name="Tivey A."/>
            <person name="Walsh S.V."/>
            <person name="Warren T."/>
            <person name="Whitehead S."/>
            <person name="Woodward J.R."/>
            <person name="Volckaert G."/>
            <person name="Aert R."/>
            <person name="Robben J."/>
            <person name="Grymonprez B."/>
            <person name="Weltjens I."/>
            <person name="Vanstreels E."/>
            <person name="Rieger M."/>
            <person name="Schaefer M."/>
            <person name="Mueller-Auer S."/>
            <person name="Gabel C."/>
            <person name="Fuchs M."/>
            <person name="Duesterhoeft A."/>
            <person name="Fritzc C."/>
            <person name="Holzer E."/>
            <person name="Moestl D."/>
            <person name="Hilbert H."/>
            <person name="Borzym K."/>
            <person name="Langer I."/>
            <person name="Beck A."/>
            <person name="Lehrach H."/>
            <person name="Reinhardt R."/>
            <person name="Pohl T.M."/>
            <person name="Eger P."/>
            <person name="Zimmermann W."/>
            <person name="Wedler H."/>
            <person name="Wambutt R."/>
            <person name="Purnelle B."/>
            <person name="Goffeau A."/>
            <person name="Cadieu E."/>
            <person name="Dreano S."/>
            <person name="Gloux S."/>
            <person name="Lelaure V."/>
            <person name="Mottier S."/>
            <person name="Galibert F."/>
            <person name="Aves S.J."/>
            <person name="Xiang Z."/>
            <person name="Hunt C."/>
            <person name="Moore K."/>
            <person name="Hurst S.M."/>
            <person name="Lucas M."/>
            <person name="Rochet M."/>
            <person name="Gaillardin C."/>
            <person name="Tallada V.A."/>
            <person name="Garzon A."/>
            <person name="Thode G."/>
            <person name="Daga R.R."/>
            <person name="Cruzado L."/>
            <person name="Jimenez J."/>
            <person name="Sanchez M."/>
            <person name="del Rey F."/>
            <person name="Benito J."/>
            <person name="Dominguez A."/>
            <person name="Revuelta J.L."/>
            <person name="Moreno S."/>
            <person name="Armstrong J."/>
            <person name="Forsburg S.L."/>
            <person name="Cerutti L."/>
            <person name="Lowe T."/>
            <person name="McCombie W.R."/>
            <person name="Paulsen I."/>
            <person name="Potashkin J."/>
            <person name="Shpakovski G.V."/>
            <person name="Ussery D."/>
            <person name="Barrell B.G."/>
            <person name="Nurse P."/>
        </authorList>
    </citation>
    <scope>NUCLEOTIDE SEQUENCE [LARGE SCALE GENOMIC DNA]</scope>
    <source>
        <strain>972 / ATCC 24843</strain>
    </source>
</reference>
<reference key="2">
    <citation type="journal article" date="2006" name="Nat. Biotechnol.">
        <title>ORFeome cloning and global analysis of protein localization in the fission yeast Schizosaccharomyces pombe.</title>
        <authorList>
            <person name="Matsuyama A."/>
            <person name="Arai R."/>
            <person name="Yashiroda Y."/>
            <person name="Shirai A."/>
            <person name="Kamata A."/>
            <person name="Sekido S."/>
            <person name="Kobayashi Y."/>
            <person name="Hashimoto A."/>
            <person name="Hamamoto M."/>
            <person name="Hiraoka Y."/>
            <person name="Horinouchi S."/>
            <person name="Yoshida M."/>
        </authorList>
    </citation>
    <scope>SUBCELLULAR LOCATION [LARGE SCALE ANALYSIS]</scope>
</reference>
<reference key="3">
    <citation type="journal article" date="2007" name="Cell">
        <title>SHREC, an effector complex for heterochromatic transcriptional silencing.</title>
        <authorList>
            <person name="Sugiyama T."/>
            <person name="Cam H.P."/>
            <person name="Sugiyama R."/>
            <person name="Noma K."/>
            <person name="Zofall M."/>
            <person name="Kobayashi R."/>
            <person name="Grewal S.I.S."/>
        </authorList>
    </citation>
    <scope>FUNCTION</scope>
    <scope>INTERACTION WITH CLR3</scope>
    <scope>SUBCELLULAR LOCATION</scope>
    <scope>MUTAGENESIS OF LYS-587</scope>
</reference>
<feature type="chain" id="PRO_0000339420" description="Chromatin remodeling factor mit1">
    <location>
        <begin position="1"/>
        <end position="1418"/>
    </location>
</feature>
<feature type="domain" description="Helicase ATP-binding" evidence="2">
    <location>
        <begin position="568"/>
        <end position="738"/>
    </location>
</feature>
<feature type="domain" description="Helicase C-terminal" evidence="3">
    <location>
        <begin position="875"/>
        <end position="1034"/>
    </location>
</feature>
<feature type="zinc finger region" description="PHD-type" evidence="1">
    <location>
        <begin position="212"/>
        <end position="271"/>
    </location>
</feature>
<feature type="zinc finger region" description="RING-type; atypical">
    <location>
        <begin position="215"/>
        <end position="269"/>
    </location>
</feature>
<feature type="region of interest" description="Disordered" evidence="4">
    <location>
        <begin position="135"/>
        <end position="156"/>
    </location>
</feature>
<feature type="compositionally biased region" description="Low complexity" evidence="4">
    <location>
        <begin position="135"/>
        <end position="148"/>
    </location>
</feature>
<feature type="binding site" evidence="2">
    <location>
        <begin position="581"/>
        <end position="588"/>
    </location>
    <ligand>
        <name>ATP</name>
        <dbReference type="ChEBI" id="CHEBI:30616"/>
    </ligand>
</feature>
<feature type="mutagenesis site" description="Weak silencing defect." evidence="5">
    <original>K</original>
    <variation>A</variation>
    <location>
        <position position="587"/>
    </location>
</feature>
<feature type="strand" evidence="8">
    <location>
        <begin position="9"/>
        <end position="14"/>
    </location>
</feature>
<feature type="helix" evidence="8">
    <location>
        <begin position="18"/>
        <end position="20"/>
    </location>
</feature>
<feature type="helix" evidence="8">
    <location>
        <begin position="22"/>
        <end position="24"/>
    </location>
</feature>
<feature type="turn" evidence="8">
    <location>
        <begin position="27"/>
        <end position="30"/>
    </location>
</feature>
<feature type="strand" evidence="8">
    <location>
        <begin position="32"/>
        <end position="39"/>
    </location>
</feature>
<feature type="strand" evidence="8">
    <location>
        <begin position="42"/>
        <end position="47"/>
    </location>
</feature>
<feature type="turn" evidence="8">
    <location>
        <begin position="48"/>
        <end position="50"/>
    </location>
</feature>
<feature type="strand" evidence="8">
    <location>
        <begin position="51"/>
        <end position="56"/>
    </location>
</feature>
<feature type="helix" evidence="8">
    <location>
        <begin position="57"/>
        <end position="62"/>
    </location>
</feature>
<feature type="helix" evidence="8">
    <location>
        <begin position="66"/>
        <end position="77"/>
    </location>
</feature>
<feature type="helix" evidence="7">
    <location>
        <begin position="1223"/>
        <end position="1230"/>
    </location>
</feature>
<feature type="helix" evidence="7">
    <location>
        <begin position="1241"/>
        <end position="1253"/>
    </location>
</feature>
<feature type="strand" evidence="7">
    <location>
        <begin position="1286"/>
        <end position="1289"/>
    </location>
</feature>
<feature type="helix" evidence="7">
    <location>
        <begin position="1293"/>
        <end position="1301"/>
    </location>
</feature>
<feature type="strand" evidence="7">
    <location>
        <begin position="1306"/>
        <end position="1308"/>
    </location>
</feature>
<feature type="turn" evidence="7">
    <location>
        <begin position="1312"/>
        <end position="1314"/>
    </location>
</feature>
<feature type="helix" evidence="7">
    <location>
        <begin position="1324"/>
        <end position="1326"/>
    </location>
</feature>
<feature type="strand" evidence="7">
    <location>
        <begin position="1330"/>
        <end position="1332"/>
    </location>
</feature>
<feature type="turn" evidence="7">
    <location>
        <begin position="1334"/>
        <end position="1336"/>
    </location>
</feature>
<feature type="strand" evidence="7">
    <location>
        <begin position="1337"/>
        <end position="1339"/>
    </location>
</feature>
<feature type="strand" evidence="7">
    <location>
        <begin position="1342"/>
        <end position="1345"/>
    </location>
</feature>
<feature type="helix" evidence="7">
    <location>
        <begin position="1348"/>
        <end position="1350"/>
    </location>
</feature>
<feature type="helix" evidence="7">
    <location>
        <begin position="1353"/>
        <end position="1364"/>
    </location>
</feature>
<feature type="helix" evidence="7">
    <location>
        <begin position="1370"/>
        <end position="1381"/>
    </location>
</feature>
<sequence length="1418" mass="162633">MPKEDDSLCKIVVRREPLDVLLPYYDASETTVQKILHENDSTLSVKFLAGVEALIKKDELDKYKNGKACLRVWLKHKSRKRYHGYMTSTDKDEEEKNDYLLKSNGSKVLRDSTRTKKFKFGKEFHCALNPSFVSDETASDSATSSSSDTNKKVNRKEHNELSLSHLSFNDTSDFGSSDLSSSEIESTENDNKAPYFSLLYSDGFDFIKFLHVCVCVKCHGREHRSSGKNFVYCDHCSNVYHYDCSPLPSLNKETRNYSQQNGFICPLCSKNSKDVLCNTGFVSGVSSGQDLVIPPSLADRESLSILVNYCKSIRFRCFRCRRVEYFFYLDSNPLSIQRTITHFIKKLVCNECSMHPCDIEEIIAWRTLNSLYPSKATLSNNFVSTSDLSFWSREYFVRSKGKSYLHCFWCSASWLAGISLAKKKNFDGLENASYDATKPIIPVSYTIIDKVWDVQYRSGKNARTAKYKTKKHQLKAISEVTFAFVSWRGLTYYMSNWEPPPKETDRNRWKAWLKGYSDLLECLWIEKAPTASINIDLPFTNLEWHSQPSFIKGGTLMPYQLKGLNWLYLRWYTHHPCILADEMGLGKTVQVISFISVLFYRHKCFPVLVIVPHATVANWERELKKWAPFLQINVLVGSEKNRSLVRDYRLINQKDPKHVSTHVLVISASNVEREISLLRKFQWKVLIVDEGQRLKNDQSSLFYYLSSVKSDFKLLLTGTPLQNNVRELFNLLQFLNPMKINAAELEKRYSIIDTEKVTELHQILKPFFLRRVKSEVLDNFPTKVEVIIPLSMTPVQKGLYKSILSKNLSLLRNITGYANTSSSGGQRTTSLNNILMQLRKTLAHPYIYSPDIEDRNLPYELAMRSLEEASCKFLILRLLVPKLITRGHRILLFSQFIQQLDILEDWFEYKNIAYARFDGASSEMERQSAIDSFNAPNSELSCFLLSTRAGGVGINLASADTVIILDPDFNPHQDMQAIARAHRYGQKKKVLVFVLTTRDSVEEKIIQNAQKKLVLDHLIVESLDQNHNSEKDLESILRHGARALFEEAGDEPSIKYNEYSVELLISEAEKQEDTSTDESDIKSNKFGFFRVWDNKHISSNHYEVKENVLVDEEDVWSVILKQREKDAMLEKTDETTSNRRLRAHHKIHYGEDLNIYDNSDDTDYTVNDRSSPGSPFPIETETISSITDTLSDKQKLKYDSSVNIENLNDESDSQKSADVHFDSILAKSLLATTPKEDEFNKTLSTINLEVANKLTSSEYINDSEMQLIDDPVFYPPYEIIEKNHQLVGRSLSKAVLDNFFLLSSLSDNVRCRCCGIKHLPAHCPLSIVPLEICFLCGTPHFSGRDTCPMLRNKEAIYRLKDSLSKSREPFHIKKQAMARLNSFLQKKEEPTVSSSAKTNELSSKVIIKESIINEAKTL</sequence>
<accession>Q9P793</accession>
<proteinExistence type="evidence at protein level"/>
<comment type="function">
    <text evidence="5">Required for proper positioning of nucleosomes at heterochromatic loci and for transcriptional gene silencing (TGS) function of the Snf2/Hdac-containing repressor complex (SHREC).</text>
</comment>
<comment type="subunit">
    <text evidence="5">Interacts with clr3.</text>
</comment>
<comment type="subcellular location">
    <subcellularLocation>
        <location>Nucleus</location>
    </subcellularLocation>
    <subcellularLocation>
        <location>Chromosome</location>
        <location>Centromere</location>
    </subcellularLocation>
    <subcellularLocation>
        <location>Chromosome</location>
        <location>Telomere</location>
    </subcellularLocation>
    <text>Associates with major heterochromatin, centromeres, sub-telomeres, rDNA and the mat locus.</text>
</comment>
<comment type="similarity">
    <text evidence="6">Belongs to the SNF2/RAD54 helicase family.</text>
</comment>
<dbReference type="EC" id="3.6.4.-"/>
<dbReference type="EMBL" id="CU329671">
    <property type="protein sequence ID" value="CAB87372.1"/>
    <property type="molecule type" value="Genomic_DNA"/>
</dbReference>
<dbReference type="RefSeq" id="NP_595385.1">
    <property type="nucleotide sequence ID" value="NM_001021292.2"/>
</dbReference>
<dbReference type="PDB" id="5IKF">
    <property type="method" value="X-ray"/>
    <property type="resolution" value="2.80 A"/>
    <property type="chains" value="A=1156-1417"/>
</dbReference>
<dbReference type="PDB" id="6FTO">
    <property type="method" value="X-ray"/>
    <property type="resolution" value="1.60 A"/>
    <property type="chains" value="C=1-81"/>
</dbReference>
<dbReference type="PDBsum" id="5IKF"/>
<dbReference type="PDBsum" id="6FTO"/>
<dbReference type="SMR" id="Q9P793"/>
<dbReference type="BioGRID" id="277847">
    <property type="interactions" value="24"/>
</dbReference>
<dbReference type="ComplexPortal" id="CPX-9261">
    <property type="entry name" value="Snf2/HDAC repressor complex"/>
</dbReference>
<dbReference type="FunCoup" id="Q9P793">
    <property type="interactions" value="30"/>
</dbReference>
<dbReference type="STRING" id="284812.Q9P793"/>
<dbReference type="iPTMnet" id="Q9P793"/>
<dbReference type="PaxDb" id="4896-SPBP35G2.10.1"/>
<dbReference type="EnsemblFungi" id="SPBP35G2.10.1">
    <property type="protein sequence ID" value="SPBP35G2.10.1:pep"/>
    <property type="gene ID" value="SPBP35G2.10"/>
</dbReference>
<dbReference type="GeneID" id="2541336"/>
<dbReference type="KEGG" id="spo:2541336"/>
<dbReference type="PomBase" id="SPBP35G2.10">
    <property type="gene designation" value="mit1"/>
</dbReference>
<dbReference type="VEuPathDB" id="FungiDB:SPBP35G2.10"/>
<dbReference type="eggNOG" id="KOG0383">
    <property type="taxonomic scope" value="Eukaryota"/>
</dbReference>
<dbReference type="HOGENOM" id="CLU_005007_0_0_1"/>
<dbReference type="InParanoid" id="Q9P793"/>
<dbReference type="OMA" id="HQDMQAI"/>
<dbReference type="PhylomeDB" id="Q9P793"/>
<dbReference type="EvolutionaryTrace" id="Q9P793"/>
<dbReference type="PRO" id="PR:Q9P793"/>
<dbReference type="Proteomes" id="UP000002485">
    <property type="component" value="Chromosome II"/>
</dbReference>
<dbReference type="GO" id="GO:0000785">
    <property type="term" value="C:chromatin"/>
    <property type="evidence" value="ECO:0000318"/>
    <property type="project" value="GO_Central"/>
</dbReference>
<dbReference type="GO" id="GO:1990342">
    <property type="term" value="C:heterochromatin island"/>
    <property type="evidence" value="ECO:0000314"/>
    <property type="project" value="PomBase"/>
</dbReference>
<dbReference type="GO" id="GO:0031934">
    <property type="term" value="C:mating-type region heterochromatin"/>
    <property type="evidence" value="ECO:0000314"/>
    <property type="project" value="PomBase"/>
</dbReference>
<dbReference type="GO" id="GO:0005634">
    <property type="term" value="C:nucleus"/>
    <property type="evidence" value="ECO:0007005"/>
    <property type="project" value="PomBase"/>
</dbReference>
<dbReference type="GO" id="GO:0005721">
    <property type="term" value="C:pericentric heterochromatin"/>
    <property type="evidence" value="ECO:0000314"/>
    <property type="project" value="PomBase"/>
</dbReference>
<dbReference type="GO" id="GO:0033553">
    <property type="term" value="C:rDNA heterochromatin"/>
    <property type="evidence" value="ECO:0000314"/>
    <property type="project" value="PomBase"/>
</dbReference>
<dbReference type="GO" id="GO:0070824">
    <property type="term" value="C:SHREC complex"/>
    <property type="evidence" value="ECO:0000314"/>
    <property type="project" value="PomBase"/>
</dbReference>
<dbReference type="GO" id="GO:0140720">
    <property type="term" value="C:subtelomeric heterochromatin"/>
    <property type="evidence" value="ECO:0000314"/>
    <property type="project" value="PomBase"/>
</dbReference>
<dbReference type="GO" id="GO:0005524">
    <property type="term" value="F:ATP binding"/>
    <property type="evidence" value="ECO:0007669"/>
    <property type="project" value="UniProtKB-KW"/>
</dbReference>
<dbReference type="GO" id="GO:0016887">
    <property type="term" value="F:ATP hydrolysis activity"/>
    <property type="evidence" value="ECO:0000314"/>
    <property type="project" value="PomBase"/>
</dbReference>
<dbReference type="GO" id="GO:0140658">
    <property type="term" value="F:ATP-dependent chromatin remodeler activity"/>
    <property type="evidence" value="ECO:0000318"/>
    <property type="project" value="GO_Central"/>
</dbReference>
<dbReference type="GO" id="GO:0003682">
    <property type="term" value="F:chromatin binding"/>
    <property type="evidence" value="ECO:0000318"/>
    <property type="project" value="GO_Central"/>
</dbReference>
<dbReference type="GO" id="GO:0003677">
    <property type="term" value="F:DNA binding"/>
    <property type="evidence" value="ECO:0000318"/>
    <property type="project" value="GO_Central"/>
</dbReference>
<dbReference type="GO" id="GO:0004386">
    <property type="term" value="F:helicase activity"/>
    <property type="evidence" value="ECO:0007669"/>
    <property type="project" value="UniProtKB-KW"/>
</dbReference>
<dbReference type="GO" id="GO:0042393">
    <property type="term" value="F:histone binding"/>
    <property type="evidence" value="ECO:0000318"/>
    <property type="project" value="GO_Central"/>
</dbReference>
<dbReference type="GO" id="GO:0140750">
    <property type="term" value="F:nucleosome array spacer activity"/>
    <property type="evidence" value="ECO:0000314"/>
    <property type="project" value="PomBase"/>
</dbReference>
<dbReference type="GO" id="GO:0031491">
    <property type="term" value="F:nucleosome binding"/>
    <property type="evidence" value="ECO:0000314"/>
    <property type="project" value="PomBase"/>
</dbReference>
<dbReference type="GO" id="GO:0008270">
    <property type="term" value="F:zinc ion binding"/>
    <property type="evidence" value="ECO:0007669"/>
    <property type="project" value="UniProtKB-KW"/>
</dbReference>
<dbReference type="GO" id="GO:0006325">
    <property type="term" value="P:chromatin organization"/>
    <property type="evidence" value="ECO:0000315"/>
    <property type="project" value="PomBase"/>
</dbReference>
<dbReference type="GO" id="GO:0006338">
    <property type="term" value="P:chromatin remodeling"/>
    <property type="evidence" value="ECO:0000314"/>
    <property type="project" value="PomBase"/>
</dbReference>
<dbReference type="GO" id="GO:0034728">
    <property type="term" value="P:nucleosome organization"/>
    <property type="evidence" value="ECO:0000314"/>
    <property type="project" value="PomBase"/>
</dbReference>
<dbReference type="GO" id="GO:0031508">
    <property type="term" value="P:pericentric heterochromatin formation"/>
    <property type="evidence" value="ECO:0000315"/>
    <property type="project" value="PomBase"/>
</dbReference>
<dbReference type="GO" id="GO:0000183">
    <property type="term" value="P:rDNA heterochromatin formation"/>
    <property type="evidence" value="ECO:0000315"/>
    <property type="project" value="PomBase"/>
</dbReference>
<dbReference type="GO" id="GO:0030466">
    <property type="term" value="P:silent mating-type cassette heterochromatin formation"/>
    <property type="evidence" value="ECO:0000315"/>
    <property type="project" value="PomBase"/>
</dbReference>
<dbReference type="GO" id="GO:0031509">
    <property type="term" value="P:subtelomeric heterochromatin formation"/>
    <property type="evidence" value="ECO:0000315"/>
    <property type="project" value="PomBase"/>
</dbReference>
<dbReference type="CDD" id="cd17919">
    <property type="entry name" value="DEXHc_Snf"/>
    <property type="match status" value="1"/>
</dbReference>
<dbReference type="CDD" id="cd15489">
    <property type="entry name" value="PHD_SF"/>
    <property type="match status" value="1"/>
</dbReference>
<dbReference type="CDD" id="cd18793">
    <property type="entry name" value="SF2_C_SNF"/>
    <property type="match status" value="1"/>
</dbReference>
<dbReference type="FunFam" id="3.40.50.10810:FF:000148">
    <property type="entry name" value="CHD gene family protein containing chromodomain, helicase domain, and DNA-binding domain"/>
    <property type="match status" value="1"/>
</dbReference>
<dbReference type="Gene3D" id="3.40.50.300">
    <property type="entry name" value="P-loop containing nucleotide triphosphate hydrolases"/>
    <property type="match status" value="1"/>
</dbReference>
<dbReference type="Gene3D" id="3.40.50.10810">
    <property type="entry name" value="Tandem AAA-ATPase domain"/>
    <property type="match status" value="1"/>
</dbReference>
<dbReference type="Gene3D" id="3.30.40.10">
    <property type="entry name" value="Zinc/RING finger domain, C3HC4 (zinc finger)"/>
    <property type="match status" value="1"/>
</dbReference>
<dbReference type="InterPro" id="IPR016197">
    <property type="entry name" value="Chromo-like_dom_sf"/>
</dbReference>
<dbReference type="InterPro" id="IPR056616">
    <property type="entry name" value="Chromo_MIT1"/>
</dbReference>
<dbReference type="InterPro" id="IPR014001">
    <property type="entry name" value="Helicase_ATP-bd"/>
</dbReference>
<dbReference type="InterPro" id="IPR001650">
    <property type="entry name" value="Helicase_C-like"/>
</dbReference>
<dbReference type="InterPro" id="IPR027417">
    <property type="entry name" value="P-loop_NTPase"/>
</dbReference>
<dbReference type="InterPro" id="IPR038718">
    <property type="entry name" value="SNF2-like_sf"/>
</dbReference>
<dbReference type="InterPro" id="IPR049730">
    <property type="entry name" value="SNF2/RAD54-like_C"/>
</dbReference>
<dbReference type="InterPro" id="IPR000330">
    <property type="entry name" value="SNF2_N"/>
</dbReference>
<dbReference type="InterPro" id="IPR019786">
    <property type="entry name" value="Zinc_finger_PHD-type_CS"/>
</dbReference>
<dbReference type="InterPro" id="IPR040934">
    <property type="entry name" value="Znf-CCCH_6"/>
</dbReference>
<dbReference type="InterPro" id="IPR041299">
    <property type="entry name" value="Znf-CCCH_7"/>
</dbReference>
<dbReference type="InterPro" id="IPR011011">
    <property type="entry name" value="Znf_FYVE_PHD"/>
</dbReference>
<dbReference type="InterPro" id="IPR001965">
    <property type="entry name" value="Znf_PHD"/>
</dbReference>
<dbReference type="InterPro" id="IPR019787">
    <property type="entry name" value="Znf_PHD-finger"/>
</dbReference>
<dbReference type="InterPro" id="IPR013083">
    <property type="entry name" value="Znf_RING/FYVE/PHD"/>
</dbReference>
<dbReference type="PANTHER" id="PTHR45623:SF17">
    <property type="entry name" value="CHROMODOMAIN-HELICASE-DNA-BINDING PROTEIN 3-RELATED"/>
    <property type="match status" value="1"/>
</dbReference>
<dbReference type="PANTHER" id="PTHR45623">
    <property type="entry name" value="CHROMODOMAIN-HELICASE-DNA-BINDING PROTEIN 3-RELATED-RELATED"/>
    <property type="match status" value="1"/>
</dbReference>
<dbReference type="Pfam" id="PF23615">
    <property type="entry name" value="Chromo_MIT1"/>
    <property type="match status" value="1"/>
</dbReference>
<dbReference type="Pfam" id="PF00271">
    <property type="entry name" value="Helicase_C"/>
    <property type="match status" value="1"/>
</dbReference>
<dbReference type="Pfam" id="PF00176">
    <property type="entry name" value="SNF2-rel_dom"/>
    <property type="match status" value="1"/>
</dbReference>
<dbReference type="Pfam" id="PF18585">
    <property type="entry name" value="zf-CCCH_6"/>
    <property type="match status" value="1"/>
</dbReference>
<dbReference type="Pfam" id="PF18586">
    <property type="entry name" value="zf-CCCH_7"/>
    <property type="match status" value="1"/>
</dbReference>
<dbReference type="SMART" id="SM00487">
    <property type="entry name" value="DEXDc"/>
    <property type="match status" value="1"/>
</dbReference>
<dbReference type="SMART" id="SM00490">
    <property type="entry name" value="HELICc"/>
    <property type="match status" value="1"/>
</dbReference>
<dbReference type="SMART" id="SM00249">
    <property type="entry name" value="PHD"/>
    <property type="match status" value="1"/>
</dbReference>
<dbReference type="SUPFAM" id="SSF54160">
    <property type="entry name" value="Chromo domain-like"/>
    <property type="match status" value="1"/>
</dbReference>
<dbReference type="SUPFAM" id="SSF57903">
    <property type="entry name" value="FYVE/PHD zinc finger"/>
    <property type="match status" value="1"/>
</dbReference>
<dbReference type="SUPFAM" id="SSF52540">
    <property type="entry name" value="P-loop containing nucleoside triphosphate hydrolases"/>
    <property type="match status" value="2"/>
</dbReference>
<dbReference type="PROSITE" id="PS51192">
    <property type="entry name" value="HELICASE_ATP_BIND_1"/>
    <property type="match status" value="1"/>
</dbReference>
<dbReference type="PROSITE" id="PS51194">
    <property type="entry name" value="HELICASE_CTER"/>
    <property type="match status" value="1"/>
</dbReference>
<dbReference type="PROSITE" id="PS01359">
    <property type="entry name" value="ZF_PHD_1"/>
    <property type="match status" value="1"/>
</dbReference>
<dbReference type="PROSITE" id="PS50016">
    <property type="entry name" value="ZF_PHD_2"/>
    <property type="match status" value="1"/>
</dbReference>
<gene>
    <name type="primary">mit1</name>
    <name type="ORF">SPBP35G2.10</name>
</gene>
<name>MIT1_SCHPO</name>
<keyword id="KW-0002">3D-structure</keyword>
<keyword id="KW-0067">ATP-binding</keyword>
<keyword id="KW-0137">Centromere</keyword>
<keyword id="KW-0158">Chromosome</keyword>
<keyword id="KW-0347">Helicase</keyword>
<keyword id="KW-0378">Hydrolase</keyword>
<keyword id="KW-0479">Metal-binding</keyword>
<keyword id="KW-0547">Nucleotide-binding</keyword>
<keyword id="KW-0539">Nucleus</keyword>
<keyword id="KW-1185">Reference proteome</keyword>
<keyword id="KW-0779">Telomere</keyword>
<keyword id="KW-0862">Zinc</keyword>
<keyword id="KW-0863">Zinc-finger</keyword>
<evidence type="ECO:0000255" key="1">
    <source>
        <dbReference type="PROSITE-ProRule" id="PRU00146"/>
    </source>
</evidence>
<evidence type="ECO:0000255" key="2">
    <source>
        <dbReference type="PROSITE-ProRule" id="PRU00541"/>
    </source>
</evidence>
<evidence type="ECO:0000255" key="3">
    <source>
        <dbReference type="PROSITE-ProRule" id="PRU00542"/>
    </source>
</evidence>
<evidence type="ECO:0000256" key="4">
    <source>
        <dbReference type="SAM" id="MobiDB-lite"/>
    </source>
</evidence>
<evidence type="ECO:0000269" key="5">
    <source>
    </source>
</evidence>
<evidence type="ECO:0000305" key="6"/>
<evidence type="ECO:0007829" key="7">
    <source>
        <dbReference type="PDB" id="5IKF"/>
    </source>
</evidence>
<evidence type="ECO:0007829" key="8">
    <source>
        <dbReference type="PDB" id="6FTO"/>
    </source>
</evidence>